<proteinExistence type="evidence at protein level"/>
<accession>Q6P1E8</accession>
<accession>A6PW10</accession>
<accession>A6PW11</accession>
<accession>A6PW12</accession>
<accession>Q5DTV8</accession>
<accession>Q6PGK8</accession>
<accession>Q9D2D8</accession>
<feature type="chain" id="PRO_0000246026" description="EF-hand calcium-binding domain-containing protein 6">
    <location>
        <begin position="1"/>
        <end position="1516"/>
    </location>
</feature>
<feature type="domain" description="EF-hand 1" evidence="3">
    <location>
        <begin position="96"/>
        <end position="131"/>
    </location>
</feature>
<feature type="domain" description="EF-hand 2" evidence="3">
    <location>
        <begin position="197"/>
        <end position="232"/>
    </location>
</feature>
<feature type="domain" description="EF-hand 3" evidence="3">
    <location>
        <begin position="321"/>
        <end position="356"/>
    </location>
</feature>
<feature type="domain" description="EF-hand 4" evidence="3">
    <location>
        <begin position="444"/>
        <end position="462"/>
    </location>
</feature>
<feature type="domain" description="EF-hand 5" evidence="3">
    <location>
        <begin position="528"/>
        <end position="563"/>
    </location>
</feature>
<feature type="domain" description="EF-hand 6" evidence="3">
    <location>
        <begin position="674"/>
        <end position="690"/>
    </location>
</feature>
<feature type="domain" description="EF-hand 7" evidence="3">
    <location>
        <begin position="763"/>
        <end position="798"/>
    </location>
</feature>
<feature type="domain" description="EF-hand 8" evidence="3">
    <location>
        <begin position="905"/>
        <end position="940"/>
    </location>
</feature>
<feature type="domain" description="EF-hand 9" evidence="3">
    <location>
        <begin position="1086"/>
        <end position="1121"/>
    </location>
</feature>
<feature type="domain" description="EF-hand 10" evidence="3">
    <location>
        <begin position="1193"/>
        <end position="1228"/>
    </location>
</feature>
<feature type="domain" description="EF-hand 11" evidence="3">
    <location>
        <begin position="1229"/>
        <end position="1264"/>
    </location>
</feature>
<feature type="domain" description="EF-hand 12" evidence="3">
    <location>
        <begin position="1348"/>
        <end position="1373"/>
    </location>
</feature>
<feature type="domain" description="EF-hand 13" evidence="3">
    <location>
        <begin position="1374"/>
        <end position="1409"/>
    </location>
</feature>
<feature type="domain" description="EF-hand 14" evidence="3">
    <location>
        <begin position="1454"/>
        <end position="1484"/>
    </location>
</feature>
<feature type="domain" description="EF-hand 15" evidence="3">
    <location>
        <begin position="1485"/>
        <end position="1516"/>
    </location>
</feature>
<feature type="region of interest" description="Disordered" evidence="4">
    <location>
        <begin position="1"/>
        <end position="23"/>
    </location>
</feature>
<feature type="region of interest" description="Disordered" evidence="4">
    <location>
        <begin position="618"/>
        <end position="638"/>
    </location>
</feature>
<feature type="region of interest" description="Disordered" evidence="4">
    <location>
        <begin position="1263"/>
        <end position="1318"/>
    </location>
</feature>
<feature type="region of interest" description="Interaction with PARK7" evidence="1">
    <location>
        <begin position="1318"/>
        <end position="1516"/>
    </location>
</feature>
<feature type="region of interest" description="Interaction with AR" evidence="1">
    <location>
        <begin position="1422"/>
        <end position="1516"/>
    </location>
</feature>
<feature type="compositionally biased region" description="Polar residues" evidence="4">
    <location>
        <begin position="12"/>
        <end position="21"/>
    </location>
</feature>
<feature type="compositionally biased region" description="Polar residues" evidence="4">
    <location>
        <begin position="628"/>
        <end position="638"/>
    </location>
</feature>
<feature type="compositionally biased region" description="Polar residues" evidence="4">
    <location>
        <begin position="1274"/>
        <end position="1297"/>
    </location>
</feature>
<feature type="binding site" evidence="3">
    <location>
        <position position="109"/>
    </location>
    <ligand>
        <name>Ca(2+)</name>
        <dbReference type="ChEBI" id="CHEBI:29108"/>
        <label>1</label>
    </ligand>
</feature>
<feature type="binding site" evidence="3">
    <location>
        <position position="111"/>
    </location>
    <ligand>
        <name>Ca(2+)</name>
        <dbReference type="ChEBI" id="CHEBI:29108"/>
        <label>1</label>
    </ligand>
</feature>
<feature type="binding site" evidence="3">
    <location>
        <position position="113"/>
    </location>
    <ligand>
        <name>Ca(2+)</name>
        <dbReference type="ChEBI" id="CHEBI:29108"/>
        <label>1</label>
    </ligand>
</feature>
<feature type="binding site" evidence="3">
    <location>
        <position position="115"/>
    </location>
    <ligand>
        <name>Ca(2+)</name>
        <dbReference type="ChEBI" id="CHEBI:29108"/>
        <label>1</label>
    </ligand>
</feature>
<feature type="binding site" evidence="3">
    <location>
        <position position="120"/>
    </location>
    <ligand>
        <name>Ca(2+)</name>
        <dbReference type="ChEBI" id="CHEBI:29108"/>
        <label>1</label>
    </ligand>
</feature>
<feature type="binding site" evidence="3">
    <location>
        <position position="210"/>
    </location>
    <ligand>
        <name>Ca(2+)</name>
        <dbReference type="ChEBI" id="CHEBI:29108"/>
        <label>2</label>
    </ligand>
</feature>
<feature type="binding site" evidence="3">
    <location>
        <position position="212"/>
    </location>
    <ligand>
        <name>Ca(2+)</name>
        <dbReference type="ChEBI" id="CHEBI:29108"/>
        <label>2</label>
    </ligand>
</feature>
<feature type="binding site" evidence="3">
    <location>
        <position position="214"/>
    </location>
    <ligand>
        <name>Ca(2+)</name>
        <dbReference type="ChEBI" id="CHEBI:29108"/>
        <label>2</label>
    </ligand>
</feature>
<feature type="binding site" evidence="3">
    <location>
        <position position="221"/>
    </location>
    <ligand>
        <name>Ca(2+)</name>
        <dbReference type="ChEBI" id="CHEBI:29108"/>
        <label>2</label>
    </ligand>
</feature>
<feature type="binding site" evidence="3">
    <location>
        <position position="776"/>
    </location>
    <ligand>
        <name>Ca(2+)</name>
        <dbReference type="ChEBI" id="CHEBI:29108"/>
        <label>3</label>
    </ligand>
</feature>
<feature type="binding site" evidence="3">
    <location>
        <position position="778"/>
    </location>
    <ligand>
        <name>Ca(2+)</name>
        <dbReference type="ChEBI" id="CHEBI:29108"/>
        <label>3</label>
    </ligand>
</feature>
<feature type="binding site" evidence="3">
    <location>
        <position position="780"/>
    </location>
    <ligand>
        <name>Ca(2+)</name>
        <dbReference type="ChEBI" id="CHEBI:29108"/>
        <label>3</label>
    </ligand>
</feature>
<feature type="binding site" evidence="3">
    <location>
        <position position="787"/>
    </location>
    <ligand>
        <name>Ca(2+)</name>
        <dbReference type="ChEBI" id="CHEBI:29108"/>
        <label>3</label>
    </ligand>
</feature>
<feature type="binding site" evidence="3">
    <location>
        <position position="1462"/>
    </location>
    <ligand>
        <name>Ca(2+)</name>
        <dbReference type="ChEBI" id="CHEBI:29108"/>
        <label>4</label>
    </ligand>
</feature>
<feature type="binding site" evidence="3">
    <location>
        <position position="1464"/>
    </location>
    <ligand>
        <name>Ca(2+)</name>
        <dbReference type="ChEBI" id="CHEBI:29108"/>
        <label>4</label>
    </ligand>
</feature>
<feature type="binding site" evidence="3">
    <location>
        <position position="1466"/>
    </location>
    <ligand>
        <name>Ca(2+)</name>
        <dbReference type="ChEBI" id="CHEBI:29108"/>
        <label>4</label>
    </ligand>
</feature>
<feature type="binding site" evidence="3">
    <location>
        <position position="1473"/>
    </location>
    <ligand>
        <name>Ca(2+)</name>
        <dbReference type="ChEBI" id="CHEBI:29108"/>
        <label>4</label>
    </ligand>
</feature>
<feature type="modified residue" description="Phosphothreonine" evidence="15">
    <location>
        <position position="906"/>
    </location>
</feature>
<feature type="modified residue" description="Phosphoserine" evidence="15">
    <location>
        <position position="1265"/>
    </location>
</feature>
<feature type="modified residue" description="Phosphoserine" evidence="15">
    <location>
        <position position="1311"/>
    </location>
</feature>
<feature type="modified residue" description="Phosphothreonine" evidence="15">
    <location>
        <position position="1315"/>
    </location>
</feature>
<feature type="modified residue" description="Phosphothreonine" evidence="15">
    <location>
        <position position="1319"/>
    </location>
</feature>
<feature type="splice variant" id="VSP_029427" description="In isoform 3." evidence="10">
    <location>
        <begin position="1"/>
        <end position="838"/>
    </location>
</feature>
<feature type="splice variant" id="VSP_019814" description="In isoform 2." evidence="8 9">
    <location>
        <begin position="1"/>
        <end position="688"/>
    </location>
</feature>
<feature type="splice variant" id="VSP_029428" description="In isoform 3." evidence="10">
    <original>PQRLIR</original>
    <variation>MSKKHG</variation>
    <location>
        <begin position="839"/>
        <end position="844"/>
    </location>
</feature>
<feature type="sequence conflict" description="In Ref. 4; AAH65111." evidence="10" ref="4">
    <original>E</original>
    <variation>K</variation>
    <location>
        <position position="632"/>
    </location>
</feature>
<feature type="sequence conflict" description="In Ref. 2; BAD90458." evidence="10" ref="2">
    <original>E</original>
    <variation>V</variation>
    <location>
        <position position="1101"/>
    </location>
</feature>
<feature type="sequence conflict" description="In Ref. 2; BAD90458." evidence="10" ref="2">
    <original>R</original>
    <variation>K</variation>
    <location>
        <position position="1181"/>
    </location>
</feature>
<feature type="sequence conflict" description="In Ref. 4; AAH56955." evidence="10" ref="4">
    <location>
        <position position="1391"/>
    </location>
</feature>
<reference key="1">
    <citation type="journal article" date="2005" name="Science">
        <title>The transcriptional landscape of the mammalian genome.</title>
        <authorList>
            <person name="Carninci P."/>
            <person name="Kasukawa T."/>
            <person name="Katayama S."/>
            <person name="Gough J."/>
            <person name="Frith M.C."/>
            <person name="Maeda N."/>
            <person name="Oyama R."/>
            <person name="Ravasi T."/>
            <person name="Lenhard B."/>
            <person name="Wells C."/>
            <person name="Kodzius R."/>
            <person name="Shimokawa K."/>
            <person name="Bajic V.B."/>
            <person name="Brenner S.E."/>
            <person name="Batalov S."/>
            <person name="Forrest A.R."/>
            <person name="Zavolan M."/>
            <person name="Davis M.J."/>
            <person name="Wilming L.G."/>
            <person name="Aidinis V."/>
            <person name="Allen J.E."/>
            <person name="Ambesi-Impiombato A."/>
            <person name="Apweiler R."/>
            <person name="Aturaliya R.N."/>
            <person name="Bailey T.L."/>
            <person name="Bansal M."/>
            <person name="Baxter L."/>
            <person name="Beisel K.W."/>
            <person name="Bersano T."/>
            <person name="Bono H."/>
            <person name="Chalk A.M."/>
            <person name="Chiu K.P."/>
            <person name="Choudhary V."/>
            <person name="Christoffels A."/>
            <person name="Clutterbuck D.R."/>
            <person name="Crowe M.L."/>
            <person name="Dalla E."/>
            <person name="Dalrymple B.P."/>
            <person name="de Bono B."/>
            <person name="Della Gatta G."/>
            <person name="di Bernardo D."/>
            <person name="Down T."/>
            <person name="Engstrom P."/>
            <person name="Fagiolini M."/>
            <person name="Faulkner G."/>
            <person name="Fletcher C.F."/>
            <person name="Fukushima T."/>
            <person name="Furuno M."/>
            <person name="Futaki S."/>
            <person name="Gariboldi M."/>
            <person name="Georgii-Hemming P."/>
            <person name="Gingeras T.R."/>
            <person name="Gojobori T."/>
            <person name="Green R.E."/>
            <person name="Gustincich S."/>
            <person name="Harbers M."/>
            <person name="Hayashi Y."/>
            <person name="Hensch T.K."/>
            <person name="Hirokawa N."/>
            <person name="Hill D."/>
            <person name="Huminiecki L."/>
            <person name="Iacono M."/>
            <person name="Ikeo K."/>
            <person name="Iwama A."/>
            <person name="Ishikawa T."/>
            <person name="Jakt M."/>
            <person name="Kanapin A."/>
            <person name="Katoh M."/>
            <person name="Kawasawa Y."/>
            <person name="Kelso J."/>
            <person name="Kitamura H."/>
            <person name="Kitano H."/>
            <person name="Kollias G."/>
            <person name="Krishnan S.P."/>
            <person name="Kruger A."/>
            <person name="Kummerfeld S.K."/>
            <person name="Kurochkin I.V."/>
            <person name="Lareau L.F."/>
            <person name="Lazarevic D."/>
            <person name="Lipovich L."/>
            <person name="Liu J."/>
            <person name="Liuni S."/>
            <person name="McWilliam S."/>
            <person name="Madan Babu M."/>
            <person name="Madera M."/>
            <person name="Marchionni L."/>
            <person name="Matsuda H."/>
            <person name="Matsuzawa S."/>
            <person name="Miki H."/>
            <person name="Mignone F."/>
            <person name="Miyake S."/>
            <person name="Morris K."/>
            <person name="Mottagui-Tabar S."/>
            <person name="Mulder N."/>
            <person name="Nakano N."/>
            <person name="Nakauchi H."/>
            <person name="Ng P."/>
            <person name="Nilsson R."/>
            <person name="Nishiguchi S."/>
            <person name="Nishikawa S."/>
            <person name="Nori F."/>
            <person name="Ohara O."/>
            <person name="Okazaki Y."/>
            <person name="Orlando V."/>
            <person name="Pang K.C."/>
            <person name="Pavan W.J."/>
            <person name="Pavesi G."/>
            <person name="Pesole G."/>
            <person name="Petrovsky N."/>
            <person name="Piazza S."/>
            <person name="Reed J."/>
            <person name="Reid J.F."/>
            <person name="Ring B.Z."/>
            <person name="Ringwald M."/>
            <person name="Rost B."/>
            <person name="Ruan Y."/>
            <person name="Salzberg S.L."/>
            <person name="Sandelin A."/>
            <person name="Schneider C."/>
            <person name="Schoenbach C."/>
            <person name="Sekiguchi K."/>
            <person name="Semple C.A."/>
            <person name="Seno S."/>
            <person name="Sessa L."/>
            <person name="Sheng Y."/>
            <person name="Shibata Y."/>
            <person name="Shimada H."/>
            <person name="Shimada K."/>
            <person name="Silva D."/>
            <person name="Sinclair B."/>
            <person name="Sperling S."/>
            <person name="Stupka E."/>
            <person name="Sugiura K."/>
            <person name="Sultana R."/>
            <person name="Takenaka Y."/>
            <person name="Taki K."/>
            <person name="Tammoja K."/>
            <person name="Tan S.L."/>
            <person name="Tang S."/>
            <person name="Taylor M.S."/>
            <person name="Tegner J."/>
            <person name="Teichmann S.A."/>
            <person name="Ueda H.R."/>
            <person name="van Nimwegen E."/>
            <person name="Verardo R."/>
            <person name="Wei C.L."/>
            <person name="Yagi K."/>
            <person name="Yamanishi H."/>
            <person name="Zabarovsky E."/>
            <person name="Zhu S."/>
            <person name="Zimmer A."/>
            <person name="Hide W."/>
            <person name="Bult C."/>
            <person name="Grimmond S.M."/>
            <person name="Teasdale R.D."/>
            <person name="Liu E.T."/>
            <person name="Brusic V."/>
            <person name="Quackenbush J."/>
            <person name="Wahlestedt C."/>
            <person name="Mattick J.S."/>
            <person name="Hume D.A."/>
            <person name="Kai C."/>
            <person name="Sasaki D."/>
            <person name="Tomaru Y."/>
            <person name="Fukuda S."/>
            <person name="Kanamori-Katayama M."/>
            <person name="Suzuki M."/>
            <person name="Aoki J."/>
            <person name="Arakawa T."/>
            <person name="Iida J."/>
            <person name="Imamura K."/>
            <person name="Itoh M."/>
            <person name="Kato T."/>
            <person name="Kawaji H."/>
            <person name="Kawagashira N."/>
            <person name="Kawashima T."/>
            <person name="Kojima M."/>
            <person name="Kondo S."/>
            <person name="Konno H."/>
            <person name="Nakano K."/>
            <person name="Ninomiya N."/>
            <person name="Nishio T."/>
            <person name="Okada M."/>
            <person name="Plessy C."/>
            <person name="Shibata K."/>
            <person name="Shiraki T."/>
            <person name="Suzuki S."/>
            <person name="Tagami M."/>
            <person name="Waki K."/>
            <person name="Watahiki A."/>
            <person name="Okamura-Oho Y."/>
            <person name="Suzuki H."/>
            <person name="Kawai J."/>
            <person name="Hayashizaki Y."/>
        </authorList>
    </citation>
    <scope>NUCLEOTIDE SEQUENCE [LARGE SCALE MRNA] (ISOFORM 2)</scope>
    <source>
        <strain>C57BL/6J</strain>
        <tissue>Testis</tissue>
    </source>
</reference>
<reference key="2">
    <citation type="submission" date="2005-02" db="EMBL/GenBank/DDBJ databases">
        <title>Prediction of the coding sequences of mouse homologues of KIAA gene. The complete nucleotide sequences of mouse KIAA-homologous cDNAs identified by screening of terminal sequences of cDNA clones randomly sampled from size-fractionated libraries.</title>
        <authorList>
            <person name="Okazaki N."/>
            <person name="Kikuno R.F."/>
            <person name="Ohara R."/>
            <person name="Inamoto S."/>
            <person name="Nagase T."/>
            <person name="Ohara O."/>
            <person name="Koga H."/>
        </authorList>
    </citation>
    <scope>NUCLEOTIDE SEQUENCE [LARGE SCALE MRNA] (ISOFORM 2)</scope>
    <source>
        <tissue>Fetal brain</tissue>
    </source>
</reference>
<reference key="3">
    <citation type="journal article" date="2009" name="PLoS Biol.">
        <title>Lineage-specific biology revealed by a finished genome assembly of the mouse.</title>
        <authorList>
            <person name="Church D.M."/>
            <person name="Goodstadt L."/>
            <person name="Hillier L.W."/>
            <person name="Zody M.C."/>
            <person name="Goldstein S."/>
            <person name="She X."/>
            <person name="Bult C.J."/>
            <person name="Agarwala R."/>
            <person name="Cherry J.L."/>
            <person name="DiCuccio M."/>
            <person name="Hlavina W."/>
            <person name="Kapustin Y."/>
            <person name="Meric P."/>
            <person name="Maglott D."/>
            <person name="Birtle Z."/>
            <person name="Marques A.C."/>
            <person name="Graves T."/>
            <person name="Zhou S."/>
            <person name="Teague B."/>
            <person name="Potamousis K."/>
            <person name="Churas C."/>
            <person name="Place M."/>
            <person name="Herschleb J."/>
            <person name="Runnheim R."/>
            <person name="Forrest D."/>
            <person name="Amos-Landgraf J."/>
            <person name="Schwartz D.C."/>
            <person name="Cheng Z."/>
            <person name="Lindblad-Toh K."/>
            <person name="Eichler E.E."/>
            <person name="Ponting C.P."/>
        </authorList>
    </citation>
    <scope>NUCLEOTIDE SEQUENCE [LARGE SCALE GENOMIC DNA]</scope>
    <source>
        <strain>C57BL/6J</strain>
    </source>
</reference>
<reference key="4">
    <citation type="journal article" date="2004" name="Genome Res.">
        <title>The status, quality, and expansion of the NIH full-length cDNA project: the Mammalian Gene Collection (MGC).</title>
        <authorList>
            <consortium name="The MGC Project Team"/>
        </authorList>
    </citation>
    <scope>NUCLEOTIDE SEQUENCE [LARGE SCALE MRNA] (ISOFORM 1)</scope>
    <source>
        <strain>C57BL/6J</strain>
        <tissue>Brain</tissue>
    </source>
</reference>
<reference key="5">
    <citation type="journal article" date="2010" name="Cell">
        <title>A tissue-specific atlas of mouse protein phosphorylation and expression.</title>
        <authorList>
            <person name="Huttlin E.L."/>
            <person name="Jedrychowski M.P."/>
            <person name="Elias J.E."/>
            <person name="Goswami T."/>
            <person name="Rad R."/>
            <person name="Beausoleil S.A."/>
            <person name="Villen J."/>
            <person name="Haas W."/>
            <person name="Sowa M.E."/>
            <person name="Gygi S.P."/>
        </authorList>
    </citation>
    <scope>PHOSPHORYLATION [LARGE SCALE ANALYSIS] AT THR-906; SER-1265; SER-1311; THR-1315 AND THR-1319</scope>
    <scope>IDENTIFICATION BY MASS SPECTROMETRY [LARGE SCALE ANALYSIS]</scope>
    <source>
        <tissue>Testis</tissue>
    </source>
</reference>
<reference evidence="13" key="6">
    <citation type="journal article" date="2023" name="Cell">
        <title>Structures of sperm flagellar doublet microtubules expand the genetic spectrum of male infertility.</title>
        <authorList>
            <person name="Zhou L."/>
            <person name="Liu H."/>
            <person name="Liu S."/>
            <person name="Yang X."/>
            <person name="Dong Y."/>
            <person name="Pan Y."/>
            <person name="Xiao Z."/>
            <person name="Zheng B."/>
            <person name="Sun Y."/>
            <person name="Huang P."/>
            <person name="Zhang X."/>
            <person name="Hu J."/>
            <person name="Sun R."/>
            <person name="Feng S."/>
            <person name="Zhu Y."/>
            <person name="Liu M."/>
            <person name="Gui M."/>
            <person name="Wu J."/>
        </authorList>
    </citation>
    <scope>STRUCTURE BY ELECTRON MICROSCOPY (3.50 ANGSTROMS) OF SPERM FLAGELLAR DOUBLET MICROTUBULES</scope>
    <scope>FUNCTION</scope>
    <scope>SUBCELLULAR LOCATION</scope>
    <scope>SUBUNIT</scope>
</reference>
<reference evidence="14" key="7">
    <citation type="journal article" date="2023" name="Cell">
        <title>De novo protein identification in mammalian sperm using in situ cryoelectron tomography and AlphaFold2 docking.</title>
        <authorList>
            <person name="Chen Z."/>
            <person name="Shiozaki M."/>
            <person name="Haas K.M."/>
            <person name="Skinner W.M."/>
            <person name="Zhao S."/>
            <person name="Guo C."/>
            <person name="Polacco B.J."/>
            <person name="Yu Z."/>
            <person name="Krogan N.J."/>
            <person name="Lishko P.V."/>
            <person name="Kaake R.M."/>
            <person name="Vale R.D."/>
            <person name="Agard D.A."/>
        </authorList>
    </citation>
    <scope>STRUCTURE BY ELECTRON MICROSCOPY (7.70 ANGSTROMS) OF SPERM FLAGELLAR DOUBLET MICROTUBULES</scope>
    <scope>FUNCTION</scope>
    <scope>SUBCELLULAR LOCATION</scope>
    <scope>SUBUNIT</scope>
</reference>
<reference evidence="11 12" key="8">
    <citation type="journal article" date="2023" name="Cell Discov.">
        <title>In-cell structural insight into the stability of sperm microtubule doublet.</title>
        <authorList>
            <person name="Tai L."/>
            <person name="Yin G."/>
            <person name="Huang X."/>
            <person name="Sun F."/>
            <person name="Zhu Y."/>
        </authorList>
    </citation>
    <scope>STRUCTURE BY ELECTRON MICROSCOPY (4.50 ANGSTROMS)</scope>
    <scope>FUNCTION</scope>
    <scope>SUBUNIT</scope>
    <scope>SUBCELLULAR LOCATION</scope>
</reference>
<sequence length="1516" mass="175771">MKRNGTRLNFAKANSTKSGSTRARDLMNKMSIIPEWHSLYSNTRKLPCSRPHSSPCKMQRTIFQDLCRPSSSTTAIANPVLSYLDIERILAQKISSRRDDIKKVFQILDRNHNQMVTKGDLKRVITAFLIPLTKDQFQDLLAQIPISSLGNVPYLEFLSRFGGGIDININGIKRVNENEVDNRRTVKEVQLTEKIFRNMRSIRKVFQVMDVNNTGLVQPQELRRVLETFCLRMQDGDYEKFLEQYNIDKTTAVDYNAFLKNLSVKNDASFKYLLSNAAELSRETQQGKNGKRLLDTGSSEDVWKNYSLDDLEKTFCQEFSKSYEKIEKALSAGDPSKGGYISLNYLKVVLDTFIYRLPRRIFIQLIRRFGLKTSTKINWKQFLTAIYERQKLEVSKTLPLKKRSSTEARNRSRKENIIKKLFKYSEDRYTALKKTLLIISSTPSGHITWEELRHILNCMVAKLNDSEFSELKQTFDPEGTGAVRVNSLLDVLDDSTKVRKMSPSTDTKTPLPVAWDSVEELVLDSITRNLQAFYSMLQSYDLRDTGTIGKNNFRKVMRVFCPYLSNEHLVRFSSKFQEAGSGRILYKKFLLSIGVGIPPPTPPLSSPKVQLSDQFQIEEPGQQDERTQPSGEKTSEINNMTKEEVIDGLKHRIQQKDPVFRKQFLSISKEPDVKINQEEFRKVLERSGMPMNDCQYAMLASKLGFKNEEGMSYQDFTMGFEDCMLSGLETVPLQSRTASRTNMDEHFISAEECLRIFPKKLKESFRDVYSAFFRIDLDRDGIISMHDFHRLLQYLQLNMVDLEFERFLSLLGLRLSVTLNFREFQNLCEKRPWKSDEAPQRLIRCKQKVADSELACEQAHQYLIMKAKTRWADLSKNFIETDNEGNGILRRRDIKNSLYGFDIPLTPREFEKLWQNYDTEGRGYITYQEFLHRLGIRYSPKVHRPYKEDYFNFLGHFTKPKQVQEEIQELQQISEREKLMNHYEEISKAFNAMEKSKPVALCRVQKVLQECGCPLKEEELISLLKSLDVSVHNNHIDPVEFLRALEISWASKARPKEKEESSPPPISFSKVTPDEVIKTMQEVVESSQPALVEAFSALDKEDTGFVKAMEFGDVLRSVCQKLTDNQYHYFLRRLRLHLTPNIHWKYFLENFSTFQDETADDWAENMPKAPPPMSPKETAHRDIVARVQKAVASHYHTIVQEFENFDTLKSNTVSRDEFRSICTRHIQILTDEQFDRLWSELPVNAKGRLKYQDFLSKLSIERVPSPPMAAGDSGESTMAQRGSSAPEFSQGTRSNLYSPPRDSRVGLKSRSHPCTPVGTPPLQNCEPIESRLRKQIQGCWRELLRECKEKDTDKQGTISAAEFLALVEKFKLDISREESQQLIVKYDLKNNGKFAYCDFIQSCVLLLKAKETSLMRRMRIQNADKMKEAGMETPSFYSALLRIQPKIVHCWRPMRRSFKTYDKNGTGLLSVADFRKVLRQYSINLSEEEFFHVLEYYDKSLSSKISYNDFLRAFLQ</sequence>
<gene>
    <name type="primary">Efcab6</name>
    <name type="synonym">Djbp</name>
    <name type="synonym">Kiaa1672</name>
</gene>
<keyword id="KW-0002">3D-structure</keyword>
<keyword id="KW-0025">Alternative splicing</keyword>
<keyword id="KW-0106">Calcium</keyword>
<keyword id="KW-0966">Cell projection</keyword>
<keyword id="KW-0969">Cilium</keyword>
<keyword id="KW-0963">Cytoplasm</keyword>
<keyword id="KW-0206">Cytoskeleton</keyword>
<keyword id="KW-0282">Flagellum</keyword>
<keyword id="KW-0479">Metal-binding</keyword>
<keyword id="KW-0539">Nucleus</keyword>
<keyword id="KW-0597">Phosphoprotein</keyword>
<keyword id="KW-1185">Reference proteome</keyword>
<keyword id="KW-0677">Repeat</keyword>
<keyword id="KW-0678">Repressor</keyword>
<keyword id="KW-0804">Transcription</keyword>
<keyword id="KW-0805">Transcription regulation</keyword>
<protein>
    <recommendedName>
        <fullName>EF-hand calcium-binding domain-containing protein 6</fullName>
    </recommendedName>
    <alternativeName>
        <fullName>DJ-1-binding protein</fullName>
        <shortName>DJBP</shortName>
    </alternativeName>
</protein>
<comment type="function">
    <text evidence="2 5 6 7">Negatively regulates the androgen receptor by recruiting histone deacetylase complex, and protein DJ-1 antagonizes this inhibition by abrogation of this complex (By similarity). Microtubule inner protein (MIP) part of the dynein-decorated doublet microtubules (DMTs) in cilia axoneme, which is required for motile cilia beating (PubMed:37295417, PubMed:37865089, PubMed:37989994).</text>
</comment>
<comment type="subunit">
    <text evidence="2 5 6 7">Microtubule inner protein component of sperm flagellar doublet microtubules (PubMed:37295417, PubMed:37865089, PubMed:37989994). Binds PARK7 (By similarity). Part of a ternary complex containing PARK7, EFCAB6/DJBP and AR (By similarity).</text>
</comment>
<comment type="subcellular location">
    <subcellularLocation>
        <location evidence="2">Nucleus</location>
    </subcellularLocation>
    <subcellularLocation>
        <location evidence="5 6 7">Cytoplasm</location>
        <location evidence="5 6 7">Cytoskeleton</location>
        <location evidence="5 6 7">Flagellum axoneme</location>
    </subcellularLocation>
</comment>
<comment type="alternative products">
    <event type="alternative splicing"/>
    <isoform>
        <id>Q6P1E8-1</id>
        <name>1</name>
        <sequence type="displayed"/>
    </isoform>
    <isoform>
        <id>Q6P1E8-3</id>
        <name>2</name>
        <sequence type="described" ref="VSP_019814"/>
    </isoform>
    <isoform>
        <id>Q6P1E8-4</id>
        <name>3</name>
        <sequence type="described" ref="VSP_029427 VSP_029428"/>
    </isoform>
</comment>
<comment type="sequence caution" evidence="10">
    <conflict type="erroneous initiation">
        <sequence resource="EMBL-CDS" id="AAH56955"/>
    </conflict>
    <text>Truncated N-terminus.</text>
</comment>
<comment type="sequence caution" evidence="10">
    <conflict type="erroneous initiation">
        <sequence resource="EMBL-CDS" id="AAH65111"/>
    </conflict>
    <text>Truncated N-terminus.</text>
</comment>
<dbReference type="EMBL" id="AK019850">
    <property type="protein sequence ID" value="BAB31880.1"/>
    <property type="molecule type" value="mRNA"/>
</dbReference>
<dbReference type="EMBL" id="AK220412">
    <property type="protein sequence ID" value="BAD90458.1"/>
    <property type="molecule type" value="mRNA"/>
</dbReference>
<dbReference type="EMBL" id="AL513354">
    <property type="status" value="NOT_ANNOTATED_CDS"/>
    <property type="molecule type" value="Genomic_DNA"/>
</dbReference>
<dbReference type="EMBL" id="AL603867">
    <property type="status" value="NOT_ANNOTATED_CDS"/>
    <property type="molecule type" value="Genomic_DNA"/>
</dbReference>
<dbReference type="EMBL" id="BC056955">
    <property type="protein sequence ID" value="AAH56955.1"/>
    <property type="status" value="ALT_INIT"/>
    <property type="molecule type" value="mRNA"/>
</dbReference>
<dbReference type="EMBL" id="BC065111">
    <property type="protein sequence ID" value="AAH65111.1"/>
    <property type="status" value="ALT_INIT"/>
    <property type="molecule type" value="mRNA"/>
</dbReference>
<dbReference type="CCDS" id="CCDS27707.2">
    <molecule id="Q6P1E8-1"/>
</dbReference>
<dbReference type="RefSeq" id="NP_001155100.1">
    <molecule id="Q6P1E8-3"/>
    <property type="nucleotide sequence ID" value="NM_001161628.2"/>
</dbReference>
<dbReference type="RefSeq" id="NP_001155101.1">
    <molecule id="Q6P1E8-4"/>
    <property type="nucleotide sequence ID" value="NM_001161629.2"/>
</dbReference>
<dbReference type="RefSeq" id="NP_084222.4">
    <molecule id="Q6P1E8-1"/>
    <property type="nucleotide sequence ID" value="NM_029946.4"/>
</dbReference>
<dbReference type="RefSeq" id="XP_006521596.1">
    <molecule id="Q6P1E8-1"/>
    <property type="nucleotide sequence ID" value="XM_006521533.3"/>
</dbReference>
<dbReference type="RefSeq" id="XP_017172280.1">
    <molecule id="Q6P1E8-1"/>
    <property type="nucleotide sequence ID" value="XM_017316791.2"/>
</dbReference>
<dbReference type="RefSeq" id="XP_036015520.1">
    <molecule id="Q6P1E8-1"/>
    <property type="nucleotide sequence ID" value="XM_036159627.1"/>
</dbReference>
<dbReference type="PDB" id="8I7O">
    <property type="method" value="EM"/>
    <property type="resolution" value="4.50 A"/>
    <property type="chains" value="Q1/Q2=1-1516"/>
</dbReference>
<dbReference type="PDB" id="8I7R">
    <property type="method" value="EM"/>
    <property type="resolution" value="6.50 A"/>
    <property type="chains" value="Q1/Q2/Q3=1-1516"/>
</dbReference>
<dbReference type="PDB" id="8IYJ">
    <property type="method" value="EM"/>
    <property type="resolution" value="3.50 A"/>
    <property type="chains" value="i2/i3/i4=1-1516"/>
</dbReference>
<dbReference type="PDB" id="8TO0">
    <property type="method" value="EM"/>
    <property type="resolution" value="7.70 A"/>
    <property type="chains" value="Ez=1-1516"/>
</dbReference>
<dbReference type="PDBsum" id="8I7O"/>
<dbReference type="PDBsum" id="8I7R"/>
<dbReference type="PDBsum" id="8IYJ"/>
<dbReference type="PDBsum" id="8TO0"/>
<dbReference type="EMDB" id="EMD-35229"/>
<dbReference type="EMDB" id="EMD-35230"/>
<dbReference type="EMDB" id="EMD-35823"/>
<dbReference type="EMDB" id="EMD-41431"/>
<dbReference type="SMR" id="Q6P1E8"/>
<dbReference type="BioGRID" id="218809">
    <property type="interactions" value="2"/>
</dbReference>
<dbReference type="FunCoup" id="Q6P1E8">
    <property type="interactions" value="379"/>
</dbReference>
<dbReference type="STRING" id="10090.ENSMUSP00000114909"/>
<dbReference type="GlyGen" id="Q6P1E8">
    <property type="glycosylation" value="1 site"/>
</dbReference>
<dbReference type="iPTMnet" id="Q6P1E8"/>
<dbReference type="PhosphoSitePlus" id="Q6P1E8"/>
<dbReference type="SwissPalm" id="Q6P1E8"/>
<dbReference type="jPOST" id="Q6P1E8"/>
<dbReference type="PaxDb" id="10090-ENSMUSP00000114909"/>
<dbReference type="ProteomicsDB" id="277445">
    <molecule id="Q6P1E8-1"/>
</dbReference>
<dbReference type="ProteomicsDB" id="277446">
    <molecule id="Q6P1E8-3"/>
</dbReference>
<dbReference type="ProteomicsDB" id="277447">
    <molecule id="Q6P1E8-4"/>
</dbReference>
<dbReference type="Antibodypedia" id="320">
    <property type="antibodies" value="24 antibodies from 9 providers"/>
</dbReference>
<dbReference type="Ensembl" id="ENSMUST00000156187.8">
    <molecule id="Q6P1E8-1"/>
    <property type="protein sequence ID" value="ENSMUSP00000114909.2"/>
    <property type="gene ID" value="ENSMUSG00000022441.18"/>
</dbReference>
<dbReference type="GeneID" id="77627"/>
<dbReference type="KEGG" id="mmu:77627"/>
<dbReference type="UCSC" id="uc007xbo.1">
    <molecule id="Q6P1E8-4"/>
    <property type="organism name" value="mouse"/>
</dbReference>
<dbReference type="UCSC" id="uc007xbq.1">
    <molecule id="Q6P1E8-1"/>
    <property type="organism name" value="mouse"/>
</dbReference>
<dbReference type="AGR" id="MGI:1924877"/>
<dbReference type="CTD" id="64800"/>
<dbReference type="MGI" id="MGI:1924877">
    <property type="gene designation" value="Efcab6"/>
</dbReference>
<dbReference type="VEuPathDB" id="HostDB:ENSMUSG00000022441"/>
<dbReference type="eggNOG" id="KOG0027">
    <property type="taxonomic scope" value="Eukaryota"/>
</dbReference>
<dbReference type="GeneTree" id="ENSGT00390000013629"/>
<dbReference type="HOGENOM" id="CLU_004260_0_0_1"/>
<dbReference type="InParanoid" id="Q6P1E8"/>
<dbReference type="OMA" id="NLCEKRS"/>
<dbReference type="OrthoDB" id="26525at2759"/>
<dbReference type="PhylomeDB" id="Q6P1E8"/>
<dbReference type="TreeFam" id="TF329179"/>
<dbReference type="BioGRID-ORCS" id="77627">
    <property type="hits" value="3 hits in 77 CRISPR screens"/>
</dbReference>
<dbReference type="ChiTaRS" id="Efcab6">
    <property type="organism name" value="mouse"/>
</dbReference>
<dbReference type="PRO" id="PR:Q6P1E8"/>
<dbReference type="Proteomes" id="UP000000589">
    <property type="component" value="Chromosome 15"/>
</dbReference>
<dbReference type="RNAct" id="Q6P1E8">
    <property type="molecule type" value="protein"/>
</dbReference>
<dbReference type="Bgee" id="ENSMUSG00000022441">
    <property type="expression patterns" value="Expressed in spermatid and 56 other cell types or tissues"/>
</dbReference>
<dbReference type="ExpressionAtlas" id="Q6P1E8">
    <property type="expression patterns" value="baseline and differential"/>
</dbReference>
<dbReference type="GO" id="GO:0160111">
    <property type="term" value="C:axonemal A tubule inner sheath"/>
    <property type="evidence" value="ECO:0000314"/>
    <property type="project" value="UniProtKB"/>
</dbReference>
<dbReference type="GO" id="GO:0005654">
    <property type="term" value="C:nucleoplasm"/>
    <property type="evidence" value="ECO:0007669"/>
    <property type="project" value="Ensembl"/>
</dbReference>
<dbReference type="GO" id="GO:0036126">
    <property type="term" value="C:sperm flagellum"/>
    <property type="evidence" value="ECO:0000314"/>
    <property type="project" value="UniProtKB"/>
</dbReference>
<dbReference type="GO" id="GO:0005509">
    <property type="term" value="F:calcium ion binding"/>
    <property type="evidence" value="ECO:0007669"/>
    <property type="project" value="InterPro"/>
</dbReference>
<dbReference type="GO" id="GO:0030317">
    <property type="term" value="P:flagellated sperm motility"/>
    <property type="evidence" value="ECO:0000314"/>
    <property type="project" value="UniProtKB"/>
</dbReference>
<dbReference type="CDD" id="cd00051">
    <property type="entry name" value="EFh"/>
    <property type="match status" value="2"/>
</dbReference>
<dbReference type="FunFam" id="1.10.238.10:FF:000242">
    <property type="entry name" value="EF-hand calcium binding domain 6"/>
    <property type="match status" value="1"/>
</dbReference>
<dbReference type="FunFam" id="1.10.238.10:FF:000243">
    <property type="entry name" value="EF-hand calcium binding domain 6"/>
    <property type="match status" value="1"/>
</dbReference>
<dbReference type="FunFam" id="1.10.238.10:FF:000325">
    <property type="entry name" value="EF-hand calcium binding domain 6"/>
    <property type="match status" value="1"/>
</dbReference>
<dbReference type="FunFam" id="1.10.238.10:FF:000492">
    <property type="entry name" value="EF-hand calcium binding domain 6"/>
    <property type="match status" value="1"/>
</dbReference>
<dbReference type="FunFam" id="1.10.238.10:FF:000121">
    <property type="entry name" value="EF-hand calcium-binding domain-containing protein 6"/>
    <property type="match status" value="1"/>
</dbReference>
<dbReference type="FunFam" id="1.10.238.10:FF:000179">
    <property type="entry name" value="EF-hand calcium-binding domain-containing protein 6"/>
    <property type="match status" value="1"/>
</dbReference>
<dbReference type="FunFam" id="1.10.238.10:FF:000240">
    <property type="entry name" value="EF-hand calcium-binding domain-containing protein 6"/>
    <property type="match status" value="1"/>
</dbReference>
<dbReference type="FunFam" id="1.10.238.10:FF:000285">
    <property type="entry name" value="EF-hand calcium-binding domain-containing protein 6"/>
    <property type="match status" value="1"/>
</dbReference>
<dbReference type="Gene3D" id="1.10.238.10">
    <property type="entry name" value="EF-hand"/>
    <property type="match status" value="11"/>
</dbReference>
<dbReference type="InterPro" id="IPR011992">
    <property type="entry name" value="EF-hand-dom_pair"/>
</dbReference>
<dbReference type="InterPro" id="IPR018247">
    <property type="entry name" value="EF_Hand_1_Ca_BS"/>
</dbReference>
<dbReference type="InterPro" id="IPR015070">
    <property type="entry name" value="EF_hand_DJBP"/>
</dbReference>
<dbReference type="InterPro" id="IPR002048">
    <property type="entry name" value="EF_hand_dom"/>
</dbReference>
<dbReference type="InterPro" id="IPR052603">
    <property type="entry name" value="EFCB6"/>
</dbReference>
<dbReference type="PANTHER" id="PTHR20875:SF2">
    <property type="entry name" value="EF-HAND CALCIUM-BINDING DOMAIN-CONTAINING PROTEIN 6"/>
    <property type="match status" value="1"/>
</dbReference>
<dbReference type="PANTHER" id="PTHR20875">
    <property type="entry name" value="EF-HAND CALCIUM-BINDING DOMAIN-CONTAINING PROTEIN 6-RELATED"/>
    <property type="match status" value="1"/>
</dbReference>
<dbReference type="Pfam" id="PF08976">
    <property type="entry name" value="EF-hand_11"/>
    <property type="match status" value="1"/>
</dbReference>
<dbReference type="Pfam" id="PF13202">
    <property type="entry name" value="EF-hand_5"/>
    <property type="match status" value="2"/>
</dbReference>
<dbReference type="Pfam" id="PF13499">
    <property type="entry name" value="EF-hand_7"/>
    <property type="match status" value="1"/>
</dbReference>
<dbReference type="Pfam" id="PF13833">
    <property type="entry name" value="EF-hand_8"/>
    <property type="match status" value="1"/>
</dbReference>
<dbReference type="SMART" id="SM00054">
    <property type="entry name" value="EFh"/>
    <property type="match status" value="11"/>
</dbReference>
<dbReference type="SUPFAM" id="SSF47473">
    <property type="entry name" value="EF-hand"/>
    <property type="match status" value="7"/>
</dbReference>
<dbReference type="PROSITE" id="PS00018">
    <property type="entry name" value="EF_HAND_1"/>
    <property type="match status" value="4"/>
</dbReference>
<dbReference type="PROSITE" id="PS50222">
    <property type="entry name" value="EF_HAND_2"/>
    <property type="match status" value="15"/>
</dbReference>
<evidence type="ECO:0000250" key="1"/>
<evidence type="ECO:0000250" key="2">
    <source>
        <dbReference type="UniProtKB" id="Q5THR3"/>
    </source>
</evidence>
<evidence type="ECO:0000255" key="3">
    <source>
        <dbReference type="PROSITE-ProRule" id="PRU00448"/>
    </source>
</evidence>
<evidence type="ECO:0000256" key="4">
    <source>
        <dbReference type="SAM" id="MobiDB-lite"/>
    </source>
</evidence>
<evidence type="ECO:0000269" key="5">
    <source>
    </source>
</evidence>
<evidence type="ECO:0000269" key="6">
    <source>
    </source>
</evidence>
<evidence type="ECO:0000269" key="7">
    <source>
    </source>
</evidence>
<evidence type="ECO:0000303" key="8">
    <source>
    </source>
</evidence>
<evidence type="ECO:0000303" key="9">
    <source ref="2"/>
</evidence>
<evidence type="ECO:0000305" key="10"/>
<evidence type="ECO:0007744" key="11">
    <source>
        <dbReference type="PDB" id="8I7O"/>
    </source>
</evidence>
<evidence type="ECO:0007744" key="12">
    <source>
        <dbReference type="PDB" id="8I7R"/>
    </source>
</evidence>
<evidence type="ECO:0007744" key="13">
    <source>
        <dbReference type="PDB" id="8IYJ"/>
    </source>
</evidence>
<evidence type="ECO:0007744" key="14">
    <source>
        <dbReference type="PDB" id="8TO0"/>
    </source>
</evidence>
<evidence type="ECO:0007744" key="15">
    <source>
    </source>
</evidence>
<name>EFCB6_MOUSE</name>
<organism>
    <name type="scientific">Mus musculus</name>
    <name type="common">Mouse</name>
    <dbReference type="NCBI Taxonomy" id="10090"/>
    <lineage>
        <taxon>Eukaryota</taxon>
        <taxon>Metazoa</taxon>
        <taxon>Chordata</taxon>
        <taxon>Craniata</taxon>
        <taxon>Vertebrata</taxon>
        <taxon>Euteleostomi</taxon>
        <taxon>Mammalia</taxon>
        <taxon>Eutheria</taxon>
        <taxon>Euarchontoglires</taxon>
        <taxon>Glires</taxon>
        <taxon>Rodentia</taxon>
        <taxon>Myomorpha</taxon>
        <taxon>Muroidea</taxon>
        <taxon>Muridae</taxon>
        <taxon>Murinae</taxon>
        <taxon>Mus</taxon>
        <taxon>Mus</taxon>
    </lineage>
</organism>